<organism>
    <name type="scientific">Shewanella piezotolerans (strain WP3 / JCM 13877)</name>
    <dbReference type="NCBI Taxonomy" id="225849"/>
    <lineage>
        <taxon>Bacteria</taxon>
        <taxon>Pseudomonadati</taxon>
        <taxon>Pseudomonadota</taxon>
        <taxon>Gammaproteobacteria</taxon>
        <taxon>Alteromonadales</taxon>
        <taxon>Shewanellaceae</taxon>
        <taxon>Shewanella</taxon>
    </lineage>
</organism>
<comment type="function">
    <text evidence="1">Catalyzes the prenylation of para-hydroxybenzoate (PHB) with an all-trans polyprenyl group. Mediates the second step in the final reaction sequence of ubiquinone-8 (UQ-8) biosynthesis, which is the condensation of the polyisoprenoid side chain with PHB, generating the first membrane-bound Q intermediate 3-octaprenyl-4-hydroxybenzoate.</text>
</comment>
<comment type="catalytic activity">
    <reaction evidence="1">
        <text>all-trans-octaprenyl diphosphate + 4-hydroxybenzoate = 4-hydroxy-3-(all-trans-octaprenyl)benzoate + diphosphate</text>
        <dbReference type="Rhea" id="RHEA:27782"/>
        <dbReference type="ChEBI" id="CHEBI:1617"/>
        <dbReference type="ChEBI" id="CHEBI:17879"/>
        <dbReference type="ChEBI" id="CHEBI:33019"/>
        <dbReference type="ChEBI" id="CHEBI:57711"/>
        <dbReference type="EC" id="2.5.1.39"/>
    </reaction>
</comment>
<comment type="cofactor">
    <cofactor evidence="1">
        <name>Mg(2+)</name>
        <dbReference type="ChEBI" id="CHEBI:18420"/>
    </cofactor>
</comment>
<comment type="pathway">
    <text evidence="1">Cofactor biosynthesis; ubiquinone biosynthesis.</text>
</comment>
<comment type="subcellular location">
    <subcellularLocation>
        <location evidence="1">Cell inner membrane</location>
        <topology evidence="1">Multi-pass membrane protein</topology>
    </subcellularLocation>
</comment>
<comment type="similarity">
    <text evidence="1">Belongs to the UbiA prenyltransferase family.</text>
</comment>
<protein>
    <recommendedName>
        <fullName evidence="1">4-hydroxybenzoate octaprenyltransferase</fullName>
        <ecNumber evidence="1">2.5.1.39</ecNumber>
    </recommendedName>
    <alternativeName>
        <fullName evidence="1">4-HB polyprenyltransferase</fullName>
    </alternativeName>
</protein>
<evidence type="ECO:0000255" key="1">
    <source>
        <dbReference type="HAMAP-Rule" id="MF_01635"/>
    </source>
</evidence>
<gene>
    <name evidence="1" type="primary">ubiA</name>
    <name type="ordered locus">swp_4693</name>
</gene>
<reference key="1">
    <citation type="journal article" date="2008" name="PLoS ONE">
        <title>Environmental adaptation: genomic analysis of the piezotolerant and psychrotolerant deep-sea iron reducing bacterium Shewanella piezotolerans WP3.</title>
        <authorList>
            <person name="Wang F."/>
            <person name="Wang J."/>
            <person name="Jian H."/>
            <person name="Zhang B."/>
            <person name="Li S."/>
            <person name="Wang F."/>
            <person name="Zeng X."/>
            <person name="Gao L."/>
            <person name="Bartlett D.H."/>
            <person name="Yu J."/>
            <person name="Hu S."/>
            <person name="Xiao X."/>
        </authorList>
    </citation>
    <scope>NUCLEOTIDE SEQUENCE [LARGE SCALE GENOMIC DNA]</scope>
    <source>
        <strain>WP3 / JCM 13877</strain>
    </source>
</reference>
<keyword id="KW-0997">Cell inner membrane</keyword>
<keyword id="KW-1003">Cell membrane</keyword>
<keyword id="KW-0460">Magnesium</keyword>
<keyword id="KW-0472">Membrane</keyword>
<keyword id="KW-0808">Transferase</keyword>
<keyword id="KW-0812">Transmembrane</keyword>
<keyword id="KW-1133">Transmembrane helix</keyword>
<keyword id="KW-0831">Ubiquinone biosynthesis</keyword>
<name>UBIA_SHEPW</name>
<dbReference type="EC" id="2.5.1.39" evidence="1"/>
<dbReference type="EMBL" id="CP000472">
    <property type="protein sequence ID" value="ACJ31329.1"/>
    <property type="molecule type" value="Genomic_DNA"/>
</dbReference>
<dbReference type="RefSeq" id="WP_020914659.1">
    <property type="nucleotide sequence ID" value="NC_011566.1"/>
</dbReference>
<dbReference type="SMR" id="B8CTT5"/>
<dbReference type="STRING" id="225849.swp_4693"/>
<dbReference type="KEGG" id="swp:swp_4693"/>
<dbReference type="eggNOG" id="COG0382">
    <property type="taxonomic scope" value="Bacteria"/>
</dbReference>
<dbReference type="HOGENOM" id="CLU_034879_1_0_6"/>
<dbReference type="OrthoDB" id="9782418at2"/>
<dbReference type="UniPathway" id="UPA00232"/>
<dbReference type="Proteomes" id="UP000000753">
    <property type="component" value="Chromosome"/>
</dbReference>
<dbReference type="GO" id="GO:0005886">
    <property type="term" value="C:plasma membrane"/>
    <property type="evidence" value="ECO:0007669"/>
    <property type="project" value="UniProtKB-SubCell"/>
</dbReference>
<dbReference type="GO" id="GO:0008412">
    <property type="term" value="F:4-hydroxybenzoate polyprenyltransferase activity"/>
    <property type="evidence" value="ECO:0007669"/>
    <property type="project" value="UniProtKB-UniRule"/>
</dbReference>
<dbReference type="GO" id="GO:0006744">
    <property type="term" value="P:ubiquinone biosynthetic process"/>
    <property type="evidence" value="ECO:0007669"/>
    <property type="project" value="UniProtKB-UniRule"/>
</dbReference>
<dbReference type="CDD" id="cd13959">
    <property type="entry name" value="PT_UbiA_COQ2"/>
    <property type="match status" value="1"/>
</dbReference>
<dbReference type="FunFam" id="1.10.357.140:FF:000002">
    <property type="entry name" value="4-hydroxybenzoate octaprenyltransferase"/>
    <property type="match status" value="1"/>
</dbReference>
<dbReference type="FunFam" id="1.20.120.1780:FF:000001">
    <property type="entry name" value="4-hydroxybenzoate octaprenyltransferase"/>
    <property type="match status" value="1"/>
</dbReference>
<dbReference type="Gene3D" id="1.10.357.140">
    <property type="entry name" value="UbiA prenyltransferase"/>
    <property type="match status" value="1"/>
</dbReference>
<dbReference type="Gene3D" id="1.20.120.1780">
    <property type="entry name" value="UbiA prenyltransferase"/>
    <property type="match status" value="1"/>
</dbReference>
<dbReference type="HAMAP" id="MF_01635">
    <property type="entry name" value="UbiA"/>
    <property type="match status" value="1"/>
</dbReference>
<dbReference type="InterPro" id="IPR006370">
    <property type="entry name" value="HB_polyprenyltransferase-like"/>
</dbReference>
<dbReference type="InterPro" id="IPR039653">
    <property type="entry name" value="Prenyltransferase"/>
</dbReference>
<dbReference type="InterPro" id="IPR000537">
    <property type="entry name" value="UbiA_prenyltransferase"/>
</dbReference>
<dbReference type="InterPro" id="IPR030470">
    <property type="entry name" value="UbiA_prenylTrfase_CS"/>
</dbReference>
<dbReference type="InterPro" id="IPR044878">
    <property type="entry name" value="UbiA_sf"/>
</dbReference>
<dbReference type="NCBIfam" id="TIGR01474">
    <property type="entry name" value="ubiA_proteo"/>
    <property type="match status" value="1"/>
</dbReference>
<dbReference type="PANTHER" id="PTHR11048:SF28">
    <property type="entry name" value="4-HYDROXYBENZOATE POLYPRENYLTRANSFERASE, MITOCHONDRIAL"/>
    <property type="match status" value="1"/>
</dbReference>
<dbReference type="PANTHER" id="PTHR11048">
    <property type="entry name" value="PRENYLTRANSFERASES"/>
    <property type="match status" value="1"/>
</dbReference>
<dbReference type="Pfam" id="PF01040">
    <property type="entry name" value="UbiA"/>
    <property type="match status" value="1"/>
</dbReference>
<dbReference type="PROSITE" id="PS00943">
    <property type="entry name" value="UBIA"/>
    <property type="match status" value="1"/>
</dbReference>
<accession>B8CTT5</accession>
<feature type="chain" id="PRO_1000186691" description="4-hydroxybenzoate octaprenyltransferase">
    <location>
        <begin position="1"/>
        <end position="287"/>
    </location>
</feature>
<feature type="transmembrane region" description="Helical" evidence="1">
    <location>
        <begin position="20"/>
        <end position="38"/>
    </location>
</feature>
<feature type="transmembrane region" description="Helical" evidence="1">
    <location>
        <begin position="95"/>
        <end position="115"/>
    </location>
</feature>
<feature type="transmembrane region" description="Helical" evidence="1">
    <location>
        <begin position="211"/>
        <end position="231"/>
    </location>
</feature>
<feature type="transmembrane region" description="Helical" evidence="1">
    <location>
        <begin position="235"/>
        <end position="255"/>
    </location>
</feature>
<feature type="transmembrane region" description="Helical" evidence="1">
    <location>
        <begin position="266"/>
        <end position="286"/>
    </location>
</feature>
<proteinExistence type="inferred from homology"/>
<sequence length="287" mass="32122">MNLRDKLDVYLRLSRMDRPIGTLLLMWPCLMALWFAAGGMPDIKVLVIFVIGVVVMRACGCVINDYADRNLDAHVERTQSRPLASGEISSKEALIVFLVMALFAFCLVLLLNPLVVKLSVVGIILTIIYPFTKRYTNMPQMFLGTVWSWSIPMAYAAQTGTVPAEAWWLFAANWCWTVAYDTMYAMVDRDDDLKVGIKSTAILFGKYDRQIIAAFQFAALACFIIAGLIAERGVIYGGGILAFIGFALYQQKLIFGRERAPCFKAFLNNNWAGMALFIALGLDYLVF</sequence>